<evidence type="ECO:0000255" key="1">
    <source>
        <dbReference type="HAMAP-Rule" id="MF_00338"/>
    </source>
</evidence>
<reference key="1">
    <citation type="journal article" date="1999" name="Genetics">
        <title>Divergence of the hyperthermophilic archaea Pyrococcus furiosus and P. horikoshii inferred from complete genomic sequences.</title>
        <authorList>
            <person name="Maeder D.L."/>
            <person name="Weiss R.B."/>
            <person name="Dunn D.M."/>
            <person name="Cherry J.L."/>
            <person name="Gonzalez J.M."/>
            <person name="DiRuggiero J."/>
            <person name="Robb F.T."/>
        </authorList>
    </citation>
    <scope>NUCLEOTIDE SEQUENCE [LARGE SCALE GENOMIC DNA]</scope>
    <source>
        <strain>ATCC 43587 / DSM 3638 / JCM 8422 / Vc1</strain>
    </source>
</reference>
<comment type="similarity">
    <text evidence="1">Belongs to the UPF0145 family.</text>
</comment>
<accession>Q8U061</accession>
<feature type="chain" id="PRO_0000138500" description="UPF0145 protein PF1756">
    <location>
        <begin position="1"/>
        <end position="114"/>
    </location>
</feature>
<gene>
    <name type="ordered locus">PF1756</name>
</gene>
<sequence>MVNIMDEIIVVTTPTIPGYKIIEVKGIARGGIVMATHLGRDILALLRNIKGGEVKEYTQMMAEAREEALRRMIEHAKKLGANAVVNFRFATSNVGGGMAEVYAYGTAVVVEREK</sequence>
<protein>
    <recommendedName>
        <fullName evidence="1">UPF0145 protein PF1756</fullName>
    </recommendedName>
</protein>
<proteinExistence type="inferred from homology"/>
<keyword id="KW-1185">Reference proteome</keyword>
<name>Y1756_PYRFU</name>
<organism>
    <name type="scientific">Pyrococcus furiosus (strain ATCC 43587 / DSM 3638 / JCM 8422 / Vc1)</name>
    <dbReference type="NCBI Taxonomy" id="186497"/>
    <lineage>
        <taxon>Archaea</taxon>
        <taxon>Methanobacteriati</taxon>
        <taxon>Methanobacteriota</taxon>
        <taxon>Thermococci</taxon>
        <taxon>Thermococcales</taxon>
        <taxon>Thermococcaceae</taxon>
        <taxon>Pyrococcus</taxon>
    </lineage>
</organism>
<dbReference type="EMBL" id="AE009950">
    <property type="protein sequence ID" value="AAL81880.1"/>
    <property type="molecule type" value="Genomic_DNA"/>
</dbReference>
<dbReference type="SMR" id="Q8U061"/>
<dbReference type="STRING" id="186497.PF1756"/>
<dbReference type="PaxDb" id="186497-PF1756"/>
<dbReference type="KEGG" id="pfu:PF1756"/>
<dbReference type="PATRIC" id="fig|186497.12.peg.1826"/>
<dbReference type="eggNOG" id="arCOG02287">
    <property type="taxonomic scope" value="Archaea"/>
</dbReference>
<dbReference type="HOGENOM" id="CLU_117144_1_2_2"/>
<dbReference type="OrthoDB" id="59443at2157"/>
<dbReference type="PhylomeDB" id="Q8U061"/>
<dbReference type="Proteomes" id="UP000001013">
    <property type="component" value="Chromosome"/>
</dbReference>
<dbReference type="Gene3D" id="3.30.110.70">
    <property type="entry name" value="Hypothetical protein apc22750. Chain B"/>
    <property type="match status" value="1"/>
</dbReference>
<dbReference type="HAMAP" id="MF_00338">
    <property type="entry name" value="UPF0145"/>
    <property type="match status" value="1"/>
</dbReference>
<dbReference type="InterPro" id="IPR035439">
    <property type="entry name" value="UPF0145_dom_sf"/>
</dbReference>
<dbReference type="InterPro" id="IPR002765">
    <property type="entry name" value="UPF0145_YbjQ-like"/>
</dbReference>
<dbReference type="NCBIfam" id="NF002989">
    <property type="entry name" value="PRK03732.1"/>
    <property type="match status" value="1"/>
</dbReference>
<dbReference type="PANTHER" id="PTHR34068:SF2">
    <property type="entry name" value="UPF0145 PROTEIN SCO3412"/>
    <property type="match status" value="1"/>
</dbReference>
<dbReference type="PANTHER" id="PTHR34068">
    <property type="entry name" value="UPF0145 PROTEIN YBJQ"/>
    <property type="match status" value="1"/>
</dbReference>
<dbReference type="Pfam" id="PF01906">
    <property type="entry name" value="YbjQ_1"/>
    <property type="match status" value="1"/>
</dbReference>
<dbReference type="SUPFAM" id="SSF117782">
    <property type="entry name" value="YbjQ-like"/>
    <property type="match status" value="1"/>
</dbReference>